<reference key="1">
    <citation type="journal article" date="1994" name="Yeast">
        <title>The sequence of 12.5 kb from the right arm of chromosome II predicts a new N-terminal sequence for the IRA1 protein and reveals two new genes, one of which is a DEAD-box helicase.</title>
        <authorList>
            <person name="Zagulski M."/>
            <person name="Becam A.-M."/>
            <person name="Grzybowska E."/>
            <person name="Lacroute F."/>
            <person name="Migdalski A."/>
            <person name="Slonimski P.P."/>
            <person name="Sokolowska B."/>
            <person name="Herbert C.J."/>
        </authorList>
    </citation>
    <scope>NUCLEOTIDE SEQUENCE [GENOMIC DNA]</scope>
    <source>
        <strain>ATCC 204508 / S288c</strain>
    </source>
</reference>
<reference key="2">
    <citation type="journal article" date="1994" name="EMBO J.">
        <title>Complete DNA sequence of yeast chromosome II.</title>
        <authorList>
            <person name="Feldmann H."/>
            <person name="Aigle M."/>
            <person name="Aljinovic G."/>
            <person name="Andre B."/>
            <person name="Baclet M.C."/>
            <person name="Barthe C."/>
            <person name="Baur A."/>
            <person name="Becam A.-M."/>
            <person name="Biteau N."/>
            <person name="Boles E."/>
            <person name="Brandt T."/>
            <person name="Brendel M."/>
            <person name="Brueckner M."/>
            <person name="Bussereau F."/>
            <person name="Christiansen C."/>
            <person name="Contreras R."/>
            <person name="Crouzet M."/>
            <person name="Cziepluch C."/>
            <person name="Demolis N."/>
            <person name="Delaveau T."/>
            <person name="Doignon F."/>
            <person name="Domdey H."/>
            <person name="Duesterhus S."/>
            <person name="Dubois E."/>
            <person name="Dujon B."/>
            <person name="El Bakkoury M."/>
            <person name="Entian K.-D."/>
            <person name="Feuermann M."/>
            <person name="Fiers W."/>
            <person name="Fobo G.M."/>
            <person name="Fritz C."/>
            <person name="Gassenhuber J."/>
            <person name="Glansdorff N."/>
            <person name="Goffeau A."/>
            <person name="Grivell L.A."/>
            <person name="de Haan M."/>
            <person name="Hein C."/>
            <person name="Herbert C.J."/>
            <person name="Hollenberg C.P."/>
            <person name="Holmstroem K."/>
            <person name="Jacq C."/>
            <person name="Jacquet M."/>
            <person name="Jauniaux J.-C."/>
            <person name="Jonniaux J.-L."/>
            <person name="Kallesoee T."/>
            <person name="Kiesau P."/>
            <person name="Kirchrath L."/>
            <person name="Koetter P."/>
            <person name="Korol S."/>
            <person name="Liebl S."/>
            <person name="Logghe M."/>
            <person name="Lohan A.J.E."/>
            <person name="Louis E.J."/>
            <person name="Li Z.Y."/>
            <person name="Maat M.J."/>
            <person name="Mallet L."/>
            <person name="Mannhaupt G."/>
            <person name="Messenguy F."/>
            <person name="Miosga T."/>
            <person name="Molemans F."/>
            <person name="Mueller S."/>
            <person name="Nasr F."/>
            <person name="Obermaier B."/>
            <person name="Perea J."/>
            <person name="Pierard A."/>
            <person name="Piravandi E."/>
            <person name="Pohl F.M."/>
            <person name="Pohl T.M."/>
            <person name="Potier S."/>
            <person name="Proft M."/>
            <person name="Purnelle B."/>
            <person name="Ramezani Rad M."/>
            <person name="Rieger M."/>
            <person name="Rose M."/>
            <person name="Schaaff-Gerstenschlaeger I."/>
            <person name="Scherens B."/>
            <person name="Schwarzlose C."/>
            <person name="Skala J."/>
            <person name="Slonimski P.P."/>
            <person name="Smits P.H.M."/>
            <person name="Souciet J.-L."/>
            <person name="Steensma H.Y."/>
            <person name="Stucka R."/>
            <person name="Urrestarazu L.A."/>
            <person name="van der Aart Q.J.M."/>
            <person name="Van Dyck L."/>
            <person name="Vassarotti A."/>
            <person name="Vetter I."/>
            <person name="Vierendeels F."/>
            <person name="Vissers S."/>
            <person name="Wagner G."/>
            <person name="de Wergifosse P."/>
            <person name="Wolfe K.H."/>
            <person name="Zagulski M."/>
            <person name="Zimmermann F.K."/>
            <person name="Mewes H.-W."/>
            <person name="Kleine K."/>
        </authorList>
    </citation>
    <scope>NUCLEOTIDE SEQUENCE [LARGE SCALE GENOMIC DNA]</scope>
    <source>
        <strain>ATCC 204508 / S288c</strain>
    </source>
</reference>
<reference key="3">
    <citation type="journal article" date="2014" name="G3 (Bethesda)">
        <title>The reference genome sequence of Saccharomyces cerevisiae: Then and now.</title>
        <authorList>
            <person name="Engel S.R."/>
            <person name="Dietrich F.S."/>
            <person name="Fisk D.G."/>
            <person name="Binkley G."/>
            <person name="Balakrishnan R."/>
            <person name="Costanzo M.C."/>
            <person name="Dwight S.S."/>
            <person name="Hitz B.C."/>
            <person name="Karra K."/>
            <person name="Nash R.S."/>
            <person name="Weng S."/>
            <person name="Wong E.D."/>
            <person name="Lloyd P."/>
            <person name="Skrzypek M.S."/>
            <person name="Miyasato S.R."/>
            <person name="Simison M."/>
            <person name="Cherry J.M."/>
        </authorList>
    </citation>
    <scope>GENOME REANNOTATION</scope>
    <source>
        <strain>ATCC 204508 / S288c</strain>
    </source>
</reference>
<reference key="4">
    <citation type="journal article" date="1976" name="J. Mol. Biol.">
        <title>Chromosomal genes essential for replication of a double-stranded RNA plasmid of Saccharomyces cerevisiae: the killer character of yeast.</title>
        <authorList>
            <person name="Wickner R.B."/>
            <person name="Leibowitz M.J."/>
        </authorList>
    </citation>
    <scope>FUNCTION</scope>
</reference>
<reference key="5">
    <citation type="journal article" date="2003" name="Mol. Genet. Genomics">
        <title>Mak5p, which is required for the maintenance of the M1 dsRNA virus, is encoded by the yeast ORF YBR142w and is involved in the biogenesis of the 60S subunit of the ribosome.</title>
        <authorList>
            <person name="Zagulski M."/>
            <person name="Kressler D."/>
            <person name="Becam A.-M."/>
            <person name="Rytka J."/>
            <person name="Herbert C.J."/>
        </authorList>
    </citation>
    <scope>FUNCTION</scope>
    <scope>SUBCELLULAR LOCATION</scope>
    <scope>MUTAGENESIS OF GLY-218</scope>
</reference>
<reference key="6">
    <citation type="journal article" date="2003" name="Nature">
        <title>Global analysis of protein localization in budding yeast.</title>
        <authorList>
            <person name="Huh W.-K."/>
            <person name="Falvo J.V."/>
            <person name="Gerke L.C."/>
            <person name="Carroll A.S."/>
            <person name="Howson R.W."/>
            <person name="Weissman J.S."/>
            <person name="O'Shea E.K."/>
        </authorList>
    </citation>
    <scope>SUBCELLULAR LOCATION [LARGE SCALE ANALYSIS]</scope>
</reference>
<reference key="7">
    <citation type="journal article" date="2003" name="Nature">
        <title>Global analysis of protein expression in yeast.</title>
        <authorList>
            <person name="Ghaemmaghami S."/>
            <person name="Huh W.-K."/>
            <person name="Bower K."/>
            <person name="Howson R.W."/>
            <person name="Belle A."/>
            <person name="Dephoure N."/>
            <person name="O'Shea E.K."/>
            <person name="Weissman J.S."/>
        </authorList>
    </citation>
    <scope>LEVEL OF PROTEIN EXPRESSION [LARGE SCALE ANALYSIS]</scope>
</reference>
<reference key="8">
    <citation type="journal article" date="2007" name="J. Proteome Res.">
        <title>Large-scale phosphorylation analysis of alpha-factor-arrested Saccharomyces cerevisiae.</title>
        <authorList>
            <person name="Li X."/>
            <person name="Gerber S.A."/>
            <person name="Rudner A.D."/>
            <person name="Beausoleil S.A."/>
            <person name="Haas W."/>
            <person name="Villen J."/>
            <person name="Elias J.E."/>
            <person name="Gygi S.P."/>
        </authorList>
    </citation>
    <scope>PHOSPHORYLATION [LARGE SCALE ANALYSIS] AT THR-135 AND SER-678</scope>
    <scope>IDENTIFICATION BY MASS SPECTROMETRY [LARGE SCALE ANALYSIS]</scope>
    <source>
        <strain>ADR376</strain>
    </source>
</reference>
<reference key="9">
    <citation type="journal article" date="2008" name="Mol. Cell. Proteomics">
        <title>A multidimensional chromatography technology for in-depth phosphoproteome analysis.</title>
        <authorList>
            <person name="Albuquerque C.P."/>
            <person name="Smolka M.B."/>
            <person name="Payne S.H."/>
            <person name="Bafna V."/>
            <person name="Eng J."/>
            <person name="Zhou H."/>
        </authorList>
    </citation>
    <scope>PHOSPHORYLATION [LARGE SCALE ANALYSIS] AT SER-138 AND SER-678</scope>
    <scope>IDENTIFICATION BY MASS SPECTROMETRY [LARGE SCALE ANALYSIS]</scope>
</reference>
<reference key="10">
    <citation type="journal article" date="2009" name="Science">
        <title>Global analysis of Cdk1 substrate phosphorylation sites provides insights into evolution.</title>
        <authorList>
            <person name="Holt L.J."/>
            <person name="Tuch B.B."/>
            <person name="Villen J."/>
            <person name="Johnson A.D."/>
            <person name="Gygi S.P."/>
            <person name="Morgan D.O."/>
        </authorList>
    </citation>
    <scope>PHOSPHORYLATION [LARGE SCALE ANALYSIS] AT THR-135; SER-138 AND SER-678</scope>
    <scope>IDENTIFICATION BY MASS SPECTROMETRY [LARGE SCALE ANALYSIS]</scope>
</reference>
<keyword id="KW-0067">ATP-binding</keyword>
<keyword id="KW-0347">Helicase</keyword>
<keyword id="KW-0378">Hydrolase</keyword>
<keyword id="KW-0547">Nucleotide-binding</keyword>
<keyword id="KW-0539">Nucleus</keyword>
<keyword id="KW-0597">Phosphoprotein</keyword>
<keyword id="KW-1185">Reference proteome</keyword>
<keyword id="KW-0690">Ribosome biogenesis</keyword>
<keyword id="KW-0694">RNA-binding</keyword>
<keyword id="KW-0698">rRNA processing</keyword>
<sequence>MGKKRAPQKGKTVTKPQEIIVDESKLNWKPVDIPDTLDDFGGFYGLEEIDGVDVKVVDGKVTFVTKKDSKVLKDSNKEKVGDDQESVENESGSDSESELLEFKNLDDIKEGELSAASYSSSDEDEQGNIESSKLTDPSEDVDEDVDEDVLKENVFNKDINIDDISPVNLPEWTNLAPLSMTILQSLQNLNFLRPTEIQKKSIPVIMQGVDVMGKASTGSGKTLAYGIPIVEKLISNFSQKNKKPISLIFTPTRELAHQVTDHLKKICEPVLAKSQYSILSLTGGLSIQKQQRLLKYDNSGQIVIATPGRFLELLEKDNTLIKRFSKVNTLILDEADRLLQDGHFDEFEKIIKHLLVERRKNRENSEGSSKIWQTLIFSATFSIDLFDKLSSSRQVKDRRFKNNEDELNAVIQHLMSKIHFNSKPVIIDTNPESKVSSQIKESLIECPPLERDLYCYYFLTMFPGTTLIFCNAIDSVKKLTVYLNNLGIPAFQIHSSMTQKNRLKSLERFKQQSAKQKTINHSNPDSVQLSTVLIASDVAARGLDIPGVQHVIHYHLPRSTDIYIHRSGRTARAGSEGVSAMICSPQESMGPLRKLRKTLATKNSVSTDLNSRSTNRKPIKWQNTVPLLPIETDILSQLRERSRLAGELADHEIASNSLRKDDNWLKKAADELGIDVDSDEDDISKSNSDTFLLKNKNKKMQKTINKDKVKAMRATLNELLSVPIRKDRRQKYLTGGLVNLADNLVKKRGHNSIIGHEKTNALETLKKKKKRNN</sequence>
<organism>
    <name type="scientific">Saccharomyces cerevisiae (strain ATCC 204508 / S288c)</name>
    <name type="common">Baker's yeast</name>
    <dbReference type="NCBI Taxonomy" id="559292"/>
    <lineage>
        <taxon>Eukaryota</taxon>
        <taxon>Fungi</taxon>
        <taxon>Dikarya</taxon>
        <taxon>Ascomycota</taxon>
        <taxon>Saccharomycotina</taxon>
        <taxon>Saccharomycetes</taxon>
        <taxon>Saccharomycetales</taxon>
        <taxon>Saccharomycetaceae</taxon>
        <taxon>Saccharomyces</taxon>
    </lineage>
</organism>
<evidence type="ECO:0000255" key="1">
    <source>
        <dbReference type="PROSITE-ProRule" id="PRU00541"/>
    </source>
</evidence>
<evidence type="ECO:0000255" key="2">
    <source>
        <dbReference type="PROSITE-ProRule" id="PRU00542"/>
    </source>
</evidence>
<evidence type="ECO:0000256" key="3">
    <source>
        <dbReference type="SAM" id="MobiDB-lite"/>
    </source>
</evidence>
<evidence type="ECO:0000269" key="4">
    <source>
    </source>
</evidence>
<evidence type="ECO:0000269" key="5">
    <source>
    </source>
</evidence>
<evidence type="ECO:0000269" key="6">
    <source>
    </source>
</evidence>
<evidence type="ECO:0000269" key="7">
    <source>
    </source>
</evidence>
<evidence type="ECO:0000305" key="8"/>
<evidence type="ECO:0007744" key="9">
    <source>
    </source>
</evidence>
<evidence type="ECO:0007744" key="10">
    <source>
    </source>
</evidence>
<evidence type="ECO:0007744" key="11">
    <source>
    </source>
</evidence>
<feature type="chain" id="PRO_0000055048" description="ATP-dependent RNA helicase MAK5">
    <location>
        <begin position="1"/>
        <end position="773"/>
    </location>
</feature>
<feature type="domain" description="Helicase ATP-binding" evidence="1">
    <location>
        <begin position="202"/>
        <end position="399"/>
    </location>
</feature>
<feature type="domain" description="Helicase C-terminal" evidence="2">
    <location>
        <begin position="452"/>
        <end position="615"/>
    </location>
</feature>
<feature type="region of interest" description="Disordered" evidence="3">
    <location>
        <begin position="73"/>
        <end position="99"/>
    </location>
</feature>
<feature type="region of interest" description="Disordered" evidence="3">
    <location>
        <begin position="114"/>
        <end position="144"/>
    </location>
</feature>
<feature type="short sequence motif" description="Q motif">
    <location>
        <begin position="171"/>
        <end position="199"/>
    </location>
</feature>
<feature type="short sequence motif" description="DEAD box">
    <location>
        <begin position="333"/>
        <end position="336"/>
    </location>
</feature>
<feature type="compositionally biased region" description="Basic and acidic residues" evidence="3">
    <location>
        <begin position="73"/>
        <end position="82"/>
    </location>
</feature>
<feature type="compositionally biased region" description="Acidic residues" evidence="3">
    <location>
        <begin position="83"/>
        <end position="99"/>
    </location>
</feature>
<feature type="binding site" evidence="1">
    <location>
        <begin position="215"/>
        <end position="222"/>
    </location>
    <ligand>
        <name>ATP</name>
        <dbReference type="ChEBI" id="CHEBI:30616"/>
    </ligand>
</feature>
<feature type="modified residue" description="Phosphothreonine" evidence="9 11">
    <location>
        <position position="135"/>
    </location>
</feature>
<feature type="modified residue" description="Phosphoserine" evidence="10 11">
    <location>
        <position position="138"/>
    </location>
</feature>
<feature type="modified residue" description="Phosphoserine" evidence="9 10 11">
    <location>
        <position position="678"/>
    </location>
</feature>
<feature type="mutagenesis site" description="Delays the appearance and decreases the level of 25S rRNA." evidence="4">
    <original>G</original>
    <variation>D</variation>
    <location>
        <position position="218"/>
    </location>
</feature>
<name>MAK5_YEAST</name>
<dbReference type="EC" id="3.6.4.13"/>
<dbReference type="EMBL" id="Z36011">
    <property type="protein sequence ID" value="CAA85100.1"/>
    <property type="molecule type" value="Genomic_DNA"/>
</dbReference>
<dbReference type="EMBL" id="X78937">
    <property type="protein sequence ID" value="CAA55539.1"/>
    <property type="molecule type" value="Genomic_DNA"/>
</dbReference>
<dbReference type="EMBL" id="BK006936">
    <property type="protein sequence ID" value="DAA07258.1"/>
    <property type="molecule type" value="Genomic_DNA"/>
</dbReference>
<dbReference type="PIR" id="S46011">
    <property type="entry name" value="S46011"/>
</dbReference>
<dbReference type="RefSeq" id="NP_009700.1">
    <property type="nucleotide sequence ID" value="NM_001178490.1"/>
</dbReference>
<dbReference type="SMR" id="P38112"/>
<dbReference type="BioGRID" id="32842">
    <property type="interactions" value="428"/>
</dbReference>
<dbReference type="DIP" id="DIP-6337N"/>
<dbReference type="FunCoup" id="P38112">
    <property type="interactions" value="1120"/>
</dbReference>
<dbReference type="IntAct" id="P38112">
    <property type="interactions" value="68"/>
</dbReference>
<dbReference type="MINT" id="P38112"/>
<dbReference type="STRING" id="4932.YBR142W"/>
<dbReference type="iPTMnet" id="P38112"/>
<dbReference type="PaxDb" id="4932-YBR142W"/>
<dbReference type="PeptideAtlas" id="P38112"/>
<dbReference type="EnsemblFungi" id="YBR142W_mRNA">
    <property type="protein sequence ID" value="YBR142W"/>
    <property type="gene ID" value="YBR142W"/>
</dbReference>
<dbReference type="GeneID" id="852439"/>
<dbReference type="KEGG" id="sce:YBR142W"/>
<dbReference type="AGR" id="SGD:S000000346"/>
<dbReference type="SGD" id="S000000346">
    <property type="gene designation" value="MAK5"/>
</dbReference>
<dbReference type="VEuPathDB" id="FungiDB:YBR142W"/>
<dbReference type="eggNOG" id="KOG0347">
    <property type="taxonomic scope" value="Eukaryota"/>
</dbReference>
<dbReference type="GeneTree" id="ENSGT00550000074847"/>
<dbReference type="HOGENOM" id="CLU_003041_13_0_1"/>
<dbReference type="InParanoid" id="P38112"/>
<dbReference type="OMA" id="QMIQKAR"/>
<dbReference type="OrthoDB" id="4310724at2759"/>
<dbReference type="BioCyc" id="YEAST:G3O-29096-MONOMER"/>
<dbReference type="BioGRID-ORCS" id="852439">
    <property type="hits" value="6 hits in 10 CRISPR screens"/>
</dbReference>
<dbReference type="CD-CODE" id="BDAE0F88">
    <property type="entry name" value="Nucleolus"/>
</dbReference>
<dbReference type="CD-CODE" id="E03F929F">
    <property type="entry name" value="Stress granule"/>
</dbReference>
<dbReference type="PRO" id="PR:P38112"/>
<dbReference type="Proteomes" id="UP000002311">
    <property type="component" value="Chromosome II"/>
</dbReference>
<dbReference type="RNAct" id="P38112">
    <property type="molecule type" value="protein"/>
</dbReference>
<dbReference type="GO" id="GO:0005730">
    <property type="term" value="C:nucleolus"/>
    <property type="evidence" value="ECO:0000314"/>
    <property type="project" value="SGD"/>
</dbReference>
<dbReference type="GO" id="GO:0005524">
    <property type="term" value="F:ATP binding"/>
    <property type="evidence" value="ECO:0007669"/>
    <property type="project" value="UniProtKB-KW"/>
</dbReference>
<dbReference type="GO" id="GO:0016887">
    <property type="term" value="F:ATP hydrolysis activity"/>
    <property type="evidence" value="ECO:0007669"/>
    <property type="project" value="RHEA"/>
</dbReference>
<dbReference type="GO" id="GO:0003723">
    <property type="term" value="F:RNA binding"/>
    <property type="evidence" value="ECO:0007669"/>
    <property type="project" value="UniProtKB-KW"/>
</dbReference>
<dbReference type="GO" id="GO:0003724">
    <property type="term" value="F:RNA helicase activity"/>
    <property type="evidence" value="ECO:0000250"/>
    <property type="project" value="SGD"/>
</dbReference>
<dbReference type="GO" id="GO:0000466">
    <property type="term" value="P:maturation of 5.8S rRNA from tricistronic rRNA transcript (SSU-rRNA, 5.8S rRNA, LSU-rRNA)"/>
    <property type="evidence" value="ECO:0000315"/>
    <property type="project" value="SGD"/>
</dbReference>
<dbReference type="GO" id="GO:0000463">
    <property type="term" value="P:maturation of LSU-rRNA from tricistronic rRNA transcript (SSU-rRNA, 5.8S rRNA, LSU-rRNA)"/>
    <property type="evidence" value="ECO:0000315"/>
    <property type="project" value="SGD"/>
</dbReference>
<dbReference type="GO" id="GO:0042273">
    <property type="term" value="P:ribosomal large subunit biogenesis"/>
    <property type="evidence" value="ECO:0000315"/>
    <property type="project" value="SGD"/>
</dbReference>
<dbReference type="CDD" id="cd17946">
    <property type="entry name" value="DEADc_DDX24"/>
    <property type="match status" value="1"/>
</dbReference>
<dbReference type="CDD" id="cd18787">
    <property type="entry name" value="SF2_C_DEAD"/>
    <property type="match status" value="1"/>
</dbReference>
<dbReference type="Gene3D" id="3.40.50.300">
    <property type="entry name" value="P-loop containing nucleotide triphosphate hydrolases"/>
    <property type="match status" value="2"/>
</dbReference>
<dbReference type="InterPro" id="IPR011545">
    <property type="entry name" value="DEAD/DEAH_box_helicase_dom"/>
</dbReference>
<dbReference type="InterPro" id="IPR050079">
    <property type="entry name" value="DEAD_box_RNA_helicase"/>
</dbReference>
<dbReference type="InterPro" id="IPR014001">
    <property type="entry name" value="Helicase_ATP-bd"/>
</dbReference>
<dbReference type="InterPro" id="IPR001650">
    <property type="entry name" value="Helicase_C-like"/>
</dbReference>
<dbReference type="InterPro" id="IPR027417">
    <property type="entry name" value="P-loop_NTPase"/>
</dbReference>
<dbReference type="InterPro" id="IPR000629">
    <property type="entry name" value="RNA-helicase_DEAD-box_CS"/>
</dbReference>
<dbReference type="InterPro" id="IPR014014">
    <property type="entry name" value="RNA_helicase_DEAD_Q_motif"/>
</dbReference>
<dbReference type="PANTHER" id="PTHR47959:SF1">
    <property type="entry name" value="ATP-DEPENDENT RNA HELICASE DBPA"/>
    <property type="match status" value="1"/>
</dbReference>
<dbReference type="PANTHER" id="PTHR47959">
    <property type="entry name" value="ATP-DEPENDENT RNA HELICASE RHLE-RELATED"/>
    <property type="match status" value="1"/>
</dbReference>
<dbReference type="Pfam" id="PF00270">
    <property type="entry name" value="DEAD"/>
    <property type="match status" value="1"/>
</dbReference>
<dbReference type="Pfam" id="PF00271">
    <property type="entry name" value="Helicase_C"/>
    <property type="match status" value="1"/>
</dbReference>
<dbReference type="SMART" id="SM00487">
    <property type="entry name" value="DEXDc"/>
    <property type="match status" value="1"/>
</dbReference>
<dbReference type="SMART" id="SM00490">
    <property type="entry name" value="HELICc"/>
    <property type="match status" value="1"/>
</dbReference>
<dbReference type="SUPFAM" id="SSF52540">
    <property type="entry name" value="P-loop containing nucleoside triphosphate hydrolases"/>
    <property type="match status" value="2"/>
</dbReference>
<dbReference type="PROSITE" id="PS00039">
    <property type="entry name" value="DEAD_ATP_HELICASE"/>
    <property type="match status" value="1"/>
</dbReference>
<dbReference type="PROSITE" id="PS51192">
    <property type="entry name" value="HELICASE_ATP_BIND_1"/>
    <property type="match status" value="1"/>
</dbReference>
<dbReference type="PROSITE" id="PS51194">
    <property type="entry name" value="HELICASE_CTER"/>
    <property type="match status" value="1"/>
</dbReference>
<dbReference type="PROSITE" id="PS51195">
    <property type="entry name" value="Q_MOTIF"/>
    <property type="match status" value="1"/>
</dbReference>
<proteinExistence type="evidence at protein level"/>
<accession>P38112</accession>
<accession>D6VQD8</accession>
<comment type="function">
    <text evidence="4 7">ATP-binding RNA helicase involved in the biogenesis of 60S ribosomal subunits and is required for the normal formation of 25S and 5.8S rRNAs. Required for the maintenance of dsRNA killer plasmid.</text>
</comment>
<comment type="catalytic activity">
    <reaction>
        <text>ATP + H2O = ADP + phosphate + H(+)</text>
        <dbReference type="Rhea" id="RHEA:13065"/>
        <dbReference type="ChEBI" id="CHEBI:15377"/>
        <dbReference type="ChEBI" id="CHEBI:15378"/>
        <dbReference type="ChEBI" id="CHEBI:30616"/>
        <dbReference type="ChEBI" id="CHEBI:43474"/>
        <dbReference type="ChEBI" id="CHEBI:456216"/>
        <dbReference type="EC" id="3.6.4.13"/>
    </reaction>
</comment>
<comment type="interaction">
    <interactant intactId="EBI-10394">
        <id>P38112</id>
    </interactant>
    <interactant intactId="EBI-5644">
        <id>Q12389</id>
        <label>DBP10</label>
    </interactant>
    <organismsDiffer>false</organismsDiffer>
    <experiments>3</experiments>
</comment>
<comment type="interaction">
    <interactant intactId="EBI-10394">
        <id>P38112</id>
    </interactant>
    <interactant intactId="EBI-8170">
        <id>Q03532</id>
        <label>HAS1</label>
    </interactant>
    <organismsDiffer>false</organismsDiffer>
    <experiments>4</experiments>
</comment>
<comment type="interaction">
    <interactant intactId="EBI-10394">
        <id>P38112</id>
    </interactant>
    <interactant intactId="EBI-22906">
        <id>P43586</id>
        <label>LOC1</label>
    </interactant>
    <organismsDiffer>false</organismsDiffer>
    <experiments>3</experiments>
</comment>
<comment type="interaction">
    <interactant intactId="EBI-10394">
        <id>P38112</id>
    </interactant>
    <interactant intactId="EBI-35895">
        <id>Q08208</id>
        <label>NOP12</label>
    </interactant>
    <organismsDiffer>false</organismsDiffer>
    <experiments>4</experiments>
</comment>
<comment type="interaction">
    <interactant intactId="EBI-10394">
        <id>P38112</id>
    </interactant>
    <interactant intactId="EBI-12122">
        <id>P37838</id>
        <label>NOP4</label>
    </interactant>
    <organismsDiffer>false</organismsDiffer>
    <experiments>5</experiments>
</comment>
<comment type="interaction">
    <interactant intactId="EBI-10394">
        <id>P38112</id>
    </interactant>
    <interactant intactId="EBI-15415">
        <id>P40693</id>
        <label>RLP7</label>
    </interactant>
    <organismsDiffer>false</organismsDiffer>
    <experiments>3</experiments>
</comment>
<comment type="interaction">
    <interactant intactId="EBI-10394">
        <id>P38112</id>
    </interactant>
    <interactant intactId="EBI-24614">
        <id>P38805</id>
        <label>RPF1</label>
    </interactant>
    <organismsDiffer>false</organismsDiffer>
    <experiments>3</experiments>
</comment>
<comment type="subcellular location">
    <subcellularLocation>
        <location evidence="4 5">Nucleus</location>
        <location evidence="4 5">Nucleolus</location>
    </subcellularLocation>
</comment>
<comment type="domain">
    <text>The Q motif is unique to and characteristic of the DEAD box family of RNA helicases and controls ATP binding and hydrolysis.</text>
</comment>
<comment type="miscellaneous">
    <text evidence="6">Present with 981 molecules/cell in log phase SD medium.</text>
</comment>
<comment type="similarity">
    <text evidence="8">Belongs to the DEAD box helicase family. DDX24/MAK5 subfamily.</text>
</comment>
<gene>
    <name type="primary">MAK5</name>
    <name type="ordered locus">YBR142W</name>
    <name type="ORF">YBR1119</name>
</gene>
<protein>
    <recommendedName>
        <fullName>ATP-dependent RNA helicase MAK5</fullName>
        <ecNumber>3.6.4.13</ecNumber>
    </recommendedName>
    <alternativeName>
        <fullName>Maintenance of killer protein 5</fullName>
    </alternativeName>
</protein>